<reference key="1">
    <citation type="journal article" date="2007" name="Mol. Plant Microbe Interact.">
        <title>Expression profiles of genes encoded by the supernumerary chromosome controlling AM-toxin biosynthesis and pathogenicity in the apple pathotype of Alternaria alternata.</title>
        <authorList>
            <person name="Harimoto Y."/>
            <person name="Hatta R."/>
            <person name="Kodama M."/>
            <person name="Yamamoto M."/>
            <person name="Otani H."/>
            <person name="Tsuge T."/>
        </authorList>
    </citation>
    <scope>NUCLEOTIDE SEQUENCE [GENOMIC DNA]</scope>
    <scope>INDUCTION</scope>
    <scope>PATHWAY</scope>
    <source>
        <strain>NBRC 8984</strain>
    </source>
</reference>
<reference key="2">
    <citation type="journal article" date="2000" name="Mol. Plant Microbe Interact.">
        <title>Cloning and characterization of a cyclic peptide synthetase gene from Alternaria alternata apple pathotype whose product is involved in AM-toxin synthesis and pathogenicity.</title>
        <authorList>
            <person name="Johnson R.D."/>
            <person name="Johnson L."/>
            <person name="Itoh Y."/>
            <person name="Kodama M."/>
            <person name="Otani H."/>
            <person name="Kohmoto K."/>
        </authorList>
    </citation>
    <scope>FUNCTION</scope>
    <source>
        <strain>M-71</strain>
    </source>
</reference>
<reference key="3">
    <citation type="journal article" date="2004" name="Mol. Microbiol.">
        <title>Dissection of the host range of the fungal plant pathogen Alternaria alternata by modification of secondary metabolism.</title>
        <authorList>
            <person name="Ito K."/>
            <person name="Tanaka T."/>
            <person name="Hatta R."/>
            <person name="Yamamoto M."/>
            <person name="Akimitsu K."/>
            <person name="Tsuge T."/>
        </authorList>
    </citation>
    <scope>FUNCTION</scope>
    <source>
        <strain>NBRC 8984</strain>
    </source>
</reference>
<reference key="4">
    <citation type="journal article" date="2013" name="FEMS Microbiol. Rev.">
        <title>Host-selective toxins produced by the plant pathogenic fungus Alternaria alternata.</title>
        <authorList>
            <person name="Tsuge T."/>
            <person name="Harimoto Y."/>
            <person name="Akimitsu K."/>
            <person name="Ohtani K."/>
            <person name="Kodama M."/>
            <person name="Akagi Y."/>
            <person name="Egusa M."/>
            <person name="Yamamoto M."/>
            <person name="Otani H."/>
        </authorList>
    </citation>
    <scope>REVIEW ON HOST-SELECTIVE TOXINS</scope>
</reference>
<feature type="chain" id="PRO_0000444866" description="Phospho-2-dehydro-3-deoxyheptonate aldolase AMT16">
    <location>
        <begin position="1"/>
        <end position="374"/>
    </location>
</feature>
<comment type="function">
    <text evidence="2 3 4 6 8 9">Nonribosomal peptide synthetase; part of the gene clusters that mediate the biosynthesis of AM-toxins, host-selective toxins (HSTs) causing Alternaria blotch on apple, a worldwide distributed disease (Probable). AM-toxins are cyclic depsipeptides containing the 3 residues 2-hydroxy-isovaleric acid (2-HIV), dehydroalanine, L-alanine which are common for all 3 AM-toxins I to III. The fourth precursor is L-alpha-amino-methoxyphenyl-valeric acid (L-Amv) for AM-toxin I, L-alpha-amino-phenyl-valeric acid (L-Apv) for AM-toxin II, and L-alpha-amino-hydroxyphenyl-valeric acid (L-Ahv) for AM-toxin III (Probable). AM-toxins have two target sites for affecting susceptible apple cells; they cause invagination of the plasma membrane and electrolyte loss and chloroplast disorganization (PubMed:22846083). The non-ribosomal peptide synthetase AMT1 contains 4 catalytic modules and is responsible for activation of each residue in AM-toxin (PubMed:10875335). The aldo-keto reductase AMT2 catalyzes the conversion of 2-keto-isovaleric acid (2-KIV) to 2-hydroxy-isovaleric acid (2-HIV), one of the precursor residues incorporated by AMT1 during AM-toxin biosynthesis, by reduction of its ketone to an alcohol (PubMed:15066029). The cytochrome P450 monooxygenase AMT3 and the thioesterase AMT4 are also important for AM-toxin production, but their exact function within the AM-toxin biosynthesis are not known yet (PubMed:17990954). Up to 21 proteins (including AMT1 to AMT4) are predicted to be involved in AM-toxin biosynthesis since their expression ishighly up-regulated in AM-toxin-producing cultures (PubMed:17990954).</text>
</comment>
<comment type="catalytic activity">
    <reaction evidence="1">
        <text>D-erythrose 4-phosphate + phosphoenolpyruvate + H2O = 7-phospho-2-dehydro-3-deoxy-D-arabino-heptonate + phosphate</text>
        <dbReference type="Rhea" id="RHEA:14717"/>
        <dbReference type="ChEBI" id="CHEBI:15377"/>
        <dbReference type="ChEBI" id="CHEBI:16897"/>
        <dbReference type="ChEBI" id="CHEBI:43474"/>
        <dbReference type="ChEBI" id="CHEBI:58394"/>
        <dbReference type="ChEBI" id="CHEBI:58702"/>
        <dbReference type="EC" id="2.5.1.54"/>
    </reaction>
</comment>
<comment type="pathway">
    <text evidence="9">Mycotoxin biosynthesis.</text>
</comment>
<comment type="induction">
    <text evidence="4">Expression is up-regulated more than 10 fold in toxin producing cultures.</text>
</comment>
<comment type="miscellaneous">
    <text evidence="4">Gene clusters encoding host-selective toxins (HSTs) are localized on conditionally dispensable chromosomes (CDCs), also called supernumerary chromosomes, where they are present in multiple copies (PubMed:17990954). The CDCs are not essential for saprophytic growth but controls host-selective pathogenicity (PubMed:17990954).</text>
</comment>
<comment type="similarity">
    <text evidence="7">Belongs to the class-I DAHP synthase family.</text>
</comment>
<protein>
    <recommendedName>
        <fullName evidence="1">Phospho-2-dehydro-3-deoxyheptonate aldolase AMT16</fullName>
        <ecNumber evidence="1">2.5.1.54</ecNumber>
    </recommendedName>
    <alternativeName>
        <fullName evidence="5">AM-toxin biosynthesis protein 16</fullName>
    </alternativeName>
</protein>
<sequence length="374" mass="41150">MSFHVNNKAVGDPLNSEDWRIKGYNPLTPPNLLQSEIPQTAKSRDTVFKAREEVIAIFQNKDAQKRLLVVIGPCSIHDPLAALEYCDRLMKLKEKYQDDLLIVMRSYLEKPRTTIGWKGLINDPDIDNSFKINKGLRISRQLFADLTEKGMPLASEMLDTISPQFLADMFSVGVIGARTTESQLHRELASGLSFPVGFKNGTDGTLDVAIDAIDSAKYPHHFLSVTKPGVVAIVGTIGNHDCFIILRGGRKGTNYDAKSIKEAREKLESEGMNPRLMIDCSHGNSEKNHMNQPKVVHAVAEQIEAGETAVIGVMIESNLKAGTQKVPKEGKAGLEYGMSITDACIDWKTTETVLAELAGAVAKRRTLLGQNGTY</sequence>
<gene>
    <name evidence="5" type="primary">AMT16</name>
</gene>
<proteinExistence type="evidence at transcript level"/>
<keyword id="KW-0028">Amino-acid biosynthesis</keyword>
<keyword id="KW-0057">Aromatic amino acid biosynthesis</keyword>
<keyword id="KW-0808">Transferase</keyword>
<keyword id="KW-0843">Virulence</keyword>
<organism>
    <name type="scientific">Alternaria alternata</name>
    <name type="common">Alternaria rot fungus</name>
    <name type="synonym">Torula alternata</name>
    <dbReference type="NCBI Taxonomy" id="5599"/>
    <lineage>
        <taxon>Eukaryota</taxon>
        <taxon>Fungi</taxon>
        <taxon>Dikarya</taxon>
        <taxon>Ascomycota</taxon>
        <taxon>Pezizomycotina</taxon>
        <taxon>Dothideomycetes</taxon>
        <taxon>Pleosporomycetidae</taxon>
        <taxon>Pleosporales</taxon>
        <taxon>Pleosporineae</taxon>
        <taxon>Pleosporaceae</taxon>
        <taxon>Alternaria</taxon>
        <taxon>Alternaria sect. Alternaria</taxon>
        <taxon>Alternaria alternata complex</taxon>
    </lineage>
</organism>
<name>AMT16_ALTAL</name>
<dbReference type="EC" id="2.5.1.54" evidence="1"/>
<dbReference type="EMBL" id="AB525198">
    <property type="protein sequence ID" value="BAI44752.1"/>
    <property type="molecule type" value="Genomic_DNA"/>
</dbReference>
<dbReference type="EMBL" id="AB525199">
    <property type="protein sequence ID" value="BAI44773.1"/>
    <property type="molecule type" value="Genomic_DNA"/>
</dbReference>
<dbReference type="SMR" id="C9K7C8"/>
<dbReference type="VEuPathDB" id="FungiDB:CC77DRAFT_1008297"/>
<dbReference type="GO" id="GO:0005737">
    <property type="term" value="C:cytoplasm"/>
    <property type="evidence" value="ECO:0007669"/>
    <property type="project" value="TreeGrafter"/>
</dbReference>
<dbReference type="GO" id="GO:0003849">
    <property type="term" value="F:3-deoxy-7-phosphoheptulonate synthase activity"/>
    <property type="evidence" value="ECO:0007669"/>
    <property type="project" value="UniProtKB-EC"/>
</dbReference>
<dbReference type="GO" id="GO:0008652">
    <property type="term" value="P:amino acid biosynthetic process"/>
    <property type="evidence" value="ECO:0007669"/>
    <property type="project" value="UniProtKB-KW"/>
</dbReference>
<dbReference type="GO" id="GO:0009073">
    <property type="term" value="P:aromatic amino acid family biosynthetic process"/>
    <property type="evidence" value="ECO:0007669"/>
    <property type="project" value="UniProtKB-KW"/>
</dbReference>
<dbReference type="FunFam" id="3.20.20.70:FF:000005">
    <property type="entry name" value="Phospho-2-dehydro-3-deoxyheptonate aldolase"/>
    <property type="match status" value="1"/>
</dbReference>
<dbReference type="Gene3D" id="3.20.20.70">
    <property type="entry name" value="Aldolase class I"/>
    <property type="match status" value="1"/>
</dbReference>
<dbReference type="InterPro" id="IPR013785">
    <property type="entry name" value="Aldolase_TIM"/>
</dbReference>
<dbReference type="InterPro" id="IPR006218">
    <property type="entry name" value="DAHP1/KDSA"/>
</dbReference>
<dbReference type="InterPro" id="IPR006219">
    <property type="entry name" value="DAHP_synth_1"/>
</dbReference>
<dbReference type="NCBIfam" id="TIGR00034">
    <property type="entry name" value="aroFGH"/>
    <property type="match status" value="1"/>
</dbReference>
<dbReference type="NCBIfam" id="NF009395">
    <property type="entry name" value="PRK12755.1"/>
    <property type="match status" value="1"/>
</dbReference>
<dbReference type="PANTHER" id="PTHR21225">
    <property type="entry name" value="PHOSPHO-2-DEHYDRO-3-DEOXYHEPTONATE ALDOLASE DAHP SYNTHETASE"/>
    <property type="match status" value="1"/>
</dbReference>
<dbReference type="PANTHER" id="PTHR21225:SF18">
    <property type="entry name" value="PHOSPHO-2-DEHYDRO-3-DEOXYHEPTONATE ALDOLASE, PHENYLALANINE-INHIBITED"/>
    <property type="match status" value="1"/>
</dbReference>
<dbReference type="Pfam" id="PF00793">
    <property type="entry name" value="DAHP_synth_1"/>
    <property type="match status" value="1"/>
</dbReference>
<dbReference type="PIRSF" id="PIRSF001361">
    <property type="entry name" value="DAHP_synthase"/>
    <property type="match status" value="1"/>
</dbReference>
<dbReference type="SUPFAM" id="SSF51569">
    <property type="entry name" value="Aldolase"/>
    <property type="match status" value="1"/>
</dbReference>
<accession>C9K7C8</accession>
<evidence type="ECO:0000255" key="1">
    <source>
        <dbReference type="PIRNR" id="PIRNR001361"/>
    </source>
</evidence>
<evidence type="ECO:0000269" key="2">
    <source>
    </source>
</evidence>
<evidence type="ECO:0000269" key="3">
    <source>
    </source>
</evidence>
<evidence type="ECO:0000269" key="4">
    <source>
    </source>
</evidence>
<evidence type="ECO:0000303" key="5">
    <source>
    </source>
</evidence>
<evidence type="ECO:0000303" key="6">
    <source>
    </source>
</evidence>
<evidence type="ECO:0000305" key="7"/>
<evidence type="ECO:0000305" key="8">
    <source>
    </source>
</evidence>
<evidence type="ECO:0000305" key="9">
    <source>
    </source>
</evidence>